<sequence length="529" mass="51611">MGSSRAPWMGRVGGHGMMALLLAGLLLPGTLAKSIGTFSDPCKDPMRITSPNDPCLTGKGDSSGFSSYSGSSSSGSSISSARSSGGGSSGSSSGSSIAQGGSAGSFKPGTGYSQVSYSSGSGSSLQGASGSSQLGSSSSHSGSSGSHSGSSSSHSSSSSSFQFSSSSFQVGNGSALPTNDNSYRGILNPSQPGQSSSSSQTFGVSSSGQSVSSNQRPCSSDIPDSPCSGGPIVSHSGPYIPSSHSVSGGQRPVVVVVDQHGSGAPGVVQGPPCSNGGLPGKPCPPITSVDKSYGGYEVVGGSSDSYLVPGMTYSKGKIYPVGYFTKENPVKGSPGVPSFAAGPPISEGKYFSSNPIIPSQSAASSAIAFQPVGTGGVQLCGGGSTGSKGPCSPSSSRVPSSSSISSSSGLPYHPCGSASQSPCSPPGTGSFSSSSSSQSSGKIILQPCGSKSSSSGHPCMSVSSLTLTGGPDGSPHPDPSAGAKPCGSSSAGKIPCRSIRDILAQVKPLGPQLADPEVFLPQGELLDSP</sequence>
<reference key="1">
    <citation type="journal article" date="2007" name="Gene">
        <title>Mapping of chimpanzee full-length cDNAs onto the human genome unveils large potential divergence of the transcriptome.</title>
        <authorList>
            <person name="Sakate R."/>
            <person name="Suto Y."/>
            <person name="Imanishi T."/>
            <person name="Tanoue T."/>
            <person name="Hida M."/>
            <person name="Hayasaka I."/>
            <person name="Kusuda J."/>
            <person name="Gojobori T."/>
            <person name="Hashimoto K."/>
            <person name="Hirai M."/>
        </authorList>
    </citation>
    <scope>NUCLEOTIDE SEQUENCE [MRNA]</scope>
    <source>
        <tissue>Skin</tissue>
    </source>
</reference>
<reference key="2">
    <citation type="journal article" date="2003" name="Proc. Natl. Acad. Sci. U.S.A.">
        <title>Comparative sequencing of human and chimpanzee MHC class I regions unveils insertions/deletions as the major path to genomic divergence.</title>
        <authorList>
            <person name="Anzai T."/>
            <person name="Shiina T."/>
            <person name="Kimura N."/>
            <person name="Yanagiya K."/>
            <person name="Kohara S."/>
            <person name="Shigenari A."/>
            <person name="Yamagata T."/>
            <person name="Kulski J.K."/>
            <person name="Naruse T.K."/>
            <person name="Fujimori Y."/>
            <person name="Fukuzumi Y."/>
            <person name="Yamazaki M."/>
            <person name="Tashiro H."/>
            <person name="Iwamoto C."/>
            <person name="Umehara Y."/>
            <person name="Imanishi T."/>
            <person name="Meyer A."/>
            <person name="Ikeo K."/>
            <person name="Gojobori T."/>
            <person name="Bahram S."/>
            <person name="Inoko H."/>
        </authorList>
    </citation>
    <scope>NUCLEOTIDE SEQUENCE [LARGE SCALE GENOMIC DNA]</scope>
</reference>
<reference key="3">
    <citation type="journal article" date="2006" name="Genetics">
        <title>Rapid evolution of major histocompatibility complex class I genes in primates generates new disease alleles in humans via hitchhiking diversity.</title>
        <authorList>
            <person name="Shiina T."/>
            <person name="Ota M."/>
            <person name="Shimizu S."/>
            <person name="Katsuyama Y."/>
            <person name="Hashimoto N."/>
            <person name="Takasu M."/>
            <person name="Anzai T."/>
            <person name="Kulski J.K."/>
            <person name="Kikkawa E."/>
            <person name="Naruse T."/>
            <person name="Kimura N."/>
            <person name="Yanagiya K."/>
            <person name="Watanabe A."/>
            <person name="Hosomichi K."/>
            <person name="Kohara S."/>
            <person name="Iwamoto C."/>
            <person name="Umehara Y."/>
            <person name="Meyer A."/>
            <person name="Wanner V."/>
            <person name="Sano K."/>
            <person name="Macquin C."/>
            <person name="Ikeo K."/>
            <person name="Tokunaga K."/>
            <person name="Gojobori T."/>
            <person name="Inoko H."/>
            <person name="Bahram S."/>
        </authorList>
    </citation>
    <scope>NUCLEOTIDE SEQUENCE [LARGE SCALE GENOMIC DNA]</scope>
</reference>
<accession>Q7YR44</accession>
<accession>A5A6L9</accession>
<accession>Q1XI12</accession>
<accession>Q1XI16</accession>
<evidence type="ECO:0000250" key="1"/>
<evidence type="ECO:0000255" key="2"/>
<evidence type="ECO:0000256" key="3">
    <source>
        <dbReference type="SAM" id="MobiDB-lite"/>
    </source>
</evidence>
<organism>
    <name type="scientific">Pan troglodytes</name>
    <name type="common">Chimpanzee</name>
    <dbReference type="NCBI Taxonomy" id="9598"/>
    <lineage>
        <taxon>Eukaryota</taxon>
        <taxon>Metazoa</taxon>
        <taxon>Chordata</taxon>
        <taxon>Craniata</taxon>
        <taxon>Vertebrata</taxon>
        <taxon>Euteleostomi</taxon>
        <taxon>Mammalia</taxon>
        <taxon>Eutheria</taxon>
        <taxon>Euarchontoglires</taxon>
        <taxon>Primates</taxon>
        <taxon>Haplorrhini</taxon>
        <taxon>Catarrhini</taxon>
        <taxon>Hominidae</taxon>
        <taxon>Pan</taxon>
    </lineage>
</organism>
<keyword id="KW-0325">Glycoprotein</keyword>
<keyword id="KW-1185">Reference proteome</keyword>
<keyword id="KW-0964">Secreted</keyword>
<keyword id="KW-0732">Signal</keyword>
<dbReference type="EMBL" id="AB222147">
    <property type="protein sequence ID" value="BAF62392.1"/>
    <property type="molecule type" value="mRNA"/>
</dbReference>
<dbReference type="EMBL" id="BA000041">
    <property type="protein sequence ID" value="BAC78170.1"/>
    <property type="molecule type" value="Genomic_DNA"/>
</dbReference>
<dbReference type="EMBL" id="AB210147">
    <property type="protein sequence ID" value="BAE92754.1"/>
    <property type="molecule type" value="Genomic_DNA"/>
</dbReference>
<dbReference type="EMBL" id="AB210148">
    <property type="protein sequence ID" value="BAE92758.1"/>
    <property type="molecule type" value="Genomic_DNA"/>
</dbReference>
<dbReference type="RefSeq" id="NP_001038969.1">
    <property type="nucleotide sequence ID" value="NM_001045504.1"/>
</dbReference>
<dbReference type="SMR" id="Q7YR44"/>
<dbReference type="FunCoup" id="Q7YR44">
    <property type="interactions" value="215"/>
</dbReference>
<dbReference type="STRING" id="9598.ENSPTRP00000077502"/>
<dbReference type="GlyCosmos" id="Q7YR44">
    <property type="glycosylation" value="1 site, No reported glycans"/>
</dbReference>
<dbReference type="PaxDb" id="9598-ENSPTRP00000030625"/>
<dbReference type="GeneID" id="462553"/>
<dbReference type="KEGG" id="ptr:462553"/>
<dbReference type="CTD" id="1041"/>
<dbReference type="eggNOG" id="ENOG502SQ6F">
    <property type="taxonomic scope" value="Eukaryota"/>
</dbReference>
<dbReference type="InParanoid" id="Q7YR44"/>
<dbReference type="OrthoDB" id="17716at9604"/>
<dbReference type="Proteomes" id="UP000002277">
    <property type="component" value="Unplaced"/>
</dbReference>
<dbReference type="GO" id="GO:0005576">
    <property type="term" value="C:extracellular region"/>
    <property type="evidence" value="ECO:0007669"/>
    <property type="project" value="UniProtKB-SubCell"/>
</dbReference>
<dbReference type="GO" id="GO:0042803">
    <property type="term" value="F:protein homodimerization activity"/>
    <property type="evidence" value="ECO:0000318"/>
    <property type="project" value="GO_Central"/>
</dbReference>
<dbReference type="GO" id="GO:0098609">
    <property type="term" value="P:cell-cell adhesion"/>
    <property type="evidence" value="ECO:0000318"/>
    <property type="project" value="GO_Central"/>
</dbReference>
<dbReference type="GO" id="GO:0043589">
    <property type="term" value="P:skin morphogenesis"/>
    <property type="evidence" value="ECO:0000250"/>
    <property type="project" value="UniProtKB"/>
</dbReference>
<dbReference type="InterPro" id="IPR026087">
    <property type="entry name" value="Corneodesmosin"/>
</dbReference>
<dbReference type="PANTHER" id="PTHR23207">
    <property type="entry name" value="CORNEODESMOSIN"/>
    <property type="match status" value="1"/>
</dbReference>
<dbReference type="PANTHER" id="PTHR23207:SF2">
    <property type="entry name" value="CORNEODESMOSIN"/>
    <property type="match status" value="1"/>
</dbReference>
<protein>
    <recommendedName>
        <fullName>Corneodesmosin</fullName>
    </recommendedName>
    <alternativeName>
        <fullName>S protein</fullName>
    </alternativeName>
</protein>
<comment type="function">
    <text evidence="1">Important for the epidermal barrier integrity.</text>
</comment>
<comment type="subcellular location">
    <subcellularLocation>
        <location>Secreted</location>
    </subcellularLocation>
    <text evidence="1">Found in corneodesmosomes, the intercellular structures that are involved in desquamation.</text>
</comment>
<gene>
    <name type="primary">CDSN</name>
</gene>
<proteinExistence type="evidence at transcript level"/>
<name>CDSN_PANTR</name>
<feature type="signal peptide" evidence="2">
    <location>
        <begin position="1"/>
        <end position="32"/>
    </location>
</feature>
<feature type="chain" id="PRO_0000020915" description="Corneodesmosin">
    <location>
        <begin position="33"/>
        <end position="529"/>
    </location>
</feature>
<feature type="region of interest" description="Disordered" evidence="3">
    <location>
        <begin position="38"/>
        <end position="248"/>
    </location>
</feature>
<feature type="region of interest" description="Disordered" evidence="3">
    <location>
        <begin position="383"/>
        <end position="492"/>
    </location>
</feature>
<feature type="compositionally biased region" description="Low complexity" evidence="3">
    <location>
        <begin position="58"/>
        <end position="83"/>
    </location>
</feature>
<feature type="compositionally biased region" description="Low complexity" evidence="3">
    <location>
        <begin position="90"/>
        <end position="100"/>
    </location>
</feature>
<feature type="compositionally biased region" description="Low complexity" evidence="3">
    <location>
        <begin position="111"/>
        <end position="175"/>
    </location>
</feature>
<feature type="compositionally biased region" description="Low complexity" evidence="3">
    <location>
        <begin position="189"/>
        <end position="231"/>
    </location>
</feature>
<feature type="compositionally biased region" description="Low complexity" evidence="3">
    <location>
        <begin position="392"/>
        <end position="408"/>
    </location>
</feature>
<feature type="compositionally biased region" description="Low complexity" evidence="3">
    <location>
        <begin position="426"/>
        <end position="441"/>
    </location>
</feature>
<feature type="compositionally biased region" description="Polar residues" evidence="3">
    <location>
        <begin position="449"/>
        <end position="467"/>
    </location>
</feature>
<feature type="glycosylation site" description="N-linked (GlcNAc...) asparagine" evidence="2">
    <location>
        <position position="172"/>
    </location>
</feature>